<feature type="chain" id="PRO_1000137794" description="DnaA initiator-associating protein DiaA">
    <location>
        <begin position="1"/>
        <end position="196"/>
    </location>
</feature>
<feature type="domain" description="SIS" evidence="1">
    <location>
        <begin position="34"/>
        <end position="196"/>
    </location>
</feature>
<keyword id="KW-0235">DNA replication</keyword>
<dbReference type="EMBL" id="CP000964">
    <property type="protein sequence ID" value="ACI07546.1"/>
    <property type="molecule type" value="Genomic_DNA"/>
</dbReference>
<dbReference type="SMR" id="B5XSZ4"/>
<dbReference type="KEGG" id="kpe:KPK_0566"/>
<dbReference type="HOGENOM" id="CLU_080999_3_1_6"/>
<dbReference type="Proteomes" id="UP000001734">
    <property type="component" value="Chromosome"/>
</dbReference>
<dbReference type="GO" id="GO:0097367">
    <property type="term" value="F:carbohydrate derivative binding"/>
    <property type="evidence" value="ECO:0007669"/>
    <property type="project" value="InterPro"/>
</dbReference>
<dbReference type="GO" id="GO:1901135">
    <property type="term" value="P:carbohydrate derivative metabolic process"/>
    <property type="evidence" value="ECO:0007669"/>
    <property type="project" value="InterPro"/>
</dbReference>
<dbReference type="GO" id="GO:0006260">
    <property type="term" value="P:DNA replication"/>
    <property type="evidence" value="ECO:0007669"/>
    <property type="project" value="UniProtKB-UniRule"/>
</dbReference>
<dbReference type="CDD" id="cd05006">
    <property type="entry name" value="SIS_GmhA"/>
    <property type="match status" value="1"/>
</dbReference>
<dbReference type="FunFam" id="3.40.50.10490:FF:000006">
    <property type="entry name" value="DnaA initiator-associating protein DiaA"/>
    <property type="match status" value="1"/>
</dbReference>
<dbReference type="Gene3D" id="3.40.50.10490">
    <property type="entry name" value="Glucose-6-phosphate isomerase like protein, domain 1"/>
    <property type="match status" value="1"/>
</dbReference>
<dbReference type="HAMAP" id="MF_01157">
    <property type="entry name" value="SIS_DiaA"/>
    <property type="match status" value="1"/>
</dbReference>
<dbReference type="InterPro" id="IPR023070">
    <property type="entry name" value="DiaA"/>
</dbReference>
<dbReference type="InterPro" id="IPR035461">
    <property type="entry name" value="GmhA/DiaA"/>
</dbReference>
<dbReference type="InterPro" id="IPR001347">
    <property type="entry name" value="SIS_dom"/>
</dbReference>
<dbReference type="InterPro" id="IPR046348">
    <property type="entry name" value="SIS_dom_sf"/>
</dbReference>
<dbReference type="InterPro" id="IPR050099">
    <property type="entry name" value="SIS_GmhA/DiaA_subfam"/>
</dbReference>
<dbReference type="NCBIfam" id="NF008138">
    <property type="entry name" value="PRK10886.1"/>
    <property type="match status" value="1"/>
</dbReference>
<dbReference type="PANTHER" id="PTHR30390:SF6">
    <property type="entry name" value="DNAA INITIATOR-ASSOCIATING PROTEIN DIAA"/>
    <property type="match status" value="1"/>
</dbReference>
<dbReference type="PANTHER" id="PTHR30390">
    <property type="entry name" value="SEDOHEPTULOSE 7-PHOSPHATE ISOMERASE / DNAA INITIATOR-ASSOCIATING FACTOR FOR REPLICATION INITIATION"/>
    <property type="match status" value="1"/>
</dbReference>
<dbReference type="Pfam" id="PF13580">
    <property type="entry name" value="SIS_2"/>
    <property type="match status" value="1"/>
</dbReference>
<dbReference type="SUPFAM" id="SSF53697">
    <property type="entry name" value="SIS domain"/>
    <property type="match status" value="1"/>
</dbReference>
<dbReference type="PROSITE" id="PS51464">
    <property type="entry name" value="SIS"/>
    <property type="match status" value="1"/>
</dbReference>
<organism>
    <name type="scientific">Klebsiella pneumoniae (strain 342)</name>
    <dbReference type="NCBI Taxonomy" id="507522"/>
    <lineage>
        <taxon>Bacteria</taxon>
        <taxon>Pseudomonadati</taxon>
        <taxon>Pseudomonadota</taxon>
        <taxon>Gammaproteobacteria</taxon>
        <taxon>Enterobacterales</taxon>
        <taxon>Enterobacteriaceae</taxon>
        <taxon>Klebsiella/Raoultella group</taxon>
        <taxon>Klebsiella</taxon>
        <taxon>Klebsiella pneumoniae complex</taxon>
    </lineage>
</organism>
<sequence length="196" mass="21092">MLDRIKACFTESIQTQIAAAEALPDAISRAAMTLVQSLLNGNKILCCGNGTSAANAQHFAASMINRFETERPGLPAIALNTDNVVLTAIANDRLHDEIYAKQVRALGHAGDVLLAISTRGNSRDIVKAVEAAVTRDMTIVALTGYDGGELAGLLGQQDVEIRIPSHRSARIQEMHMLTVNCLCDLIDNTLFPHQDD</sequence>
<gene>
    <name evidence="1" type="primary">diaA</name>
    <name type="ordered locus">KPK_0566</name>
</gene>
<proteinExistence type="inferred from homology"/>
<protein>
    <recommendedName>
        <fullName evidence="1">DnaA initiator-associating protein DiaA</fullName>
    </recommendedName>
</protein>
<name>DIAA_KLEP3</name>
<comment type="function">
    <text evidence="1">Required for the timely initiation of chromosomal replication via direct interactions with the DnaA initiator protein.</text>
</comment>
<comment type="subunit">
    <text evidence="1">Homotetramer; dimer of dimers.</text>
</comment>
<comment type="similarity">
    <text evidence="1">Belongs to the SIS family. DiaA subfamily.</text>
</comment>
<evidence type="ECO:0000255" key="1">
    <source>
        <dbReference type="HAMAP-Rule" id="MF_01157"/>
    </source>
</evidence>
<reference key="1">
    <citation type="journal article" date="2008" name="PLoS Genet.">
        <title>Complete genome sequence of the N2-fixing broad host range endophyte Klebsiella pneumoniae 342 and virulence predictions verified in mice.</title>
        <authorList>
            <person name="Fouts D.E."/>
            <person name="Tyler H.L."/>
            <person name="DeBoy R.T."/>
            <person name="Daugherty S."/>
            <person name="Ren Q."/>
            <person name="Badger J.H."/>
            <person name="Durkin A.S."/>
            <person name="Huot H."/>
            <person name="Shrivastava S."/>
            <person name="Kothari S."/>
            <person name="Dodson R.J."/>
            <person name="Mohamoud Y."/>
            <person name="Khouri H."/>
            <person name="Roesch L.F.W."/>
            <person name="Krogfelt K.A."/>
            <person name="Struve C."/>
            <person name="Triplett E.W."/>
            <person name="Methe B.A."/>
        </authorList>
    </citation>
    <scope>NUCLEOTIDE SEQUENCE [LARGE SCALE GENOMIC DNA]</scope>
    <source>
        <strain>342</strain>
    </source>
</reference>
<accession>B5XSZ4</accession>